<dbReference type="EC" id="3.1.11.1" evidence="1"/>
<dbReference type="EMBL" id="AE013218">
    <property type="protein sequence ID" value="AAM68078.1"/>
    <property type="molecule type" value="Genomic_DNA"/>
</dbReference>
<dbReference type="RefSeq" id="WP_011054044.1">
    <property type="nucleotide sequence ID" value="NC_004061.1"/>
</dbReference>
<dbReference type="SMR" id="Q8K923"/>
<dbReference type="STRING" id="198804.BUsg_537"/>
<dbReference type="GeneID" id="93004012"/>
<dbReference type="KEGG" id="bas:BUsg_537"/>
<dbReference type="eggNOG" id="COG2925">
    <property type="taxonomic scope" value="Bacteria"/>
</dbReference>
<dbReference type="HOGENOM" id="CLU_043508_1_1_6"/>
<dbReference type="Proteomes" id="UP000000416">
    <property type="component" value="Chromosome"/>
</dbReference>
<dbReference type="GO" id="GO:0000175">
    <property type="term" value="F:3'-5'-RNA exonuclease activity"/>
    <property type="evidence" value="ECO:0007669"/>
    <property type="project" value="InterPro"/>
</dbReference>
<dbReference type="GO" id="GO:0051575">
    <property type="term" value="F:5'-deoxyribose-5-phosphate lyase activity"/>
    <property type="evidence" value="ECO:0000250"/>
    <property type="project" value="UniProtKB"/>
</dbReference>
<dbReference type="GO" id="GO:0000287">
    <property type="term" value="F:magnesium ion binding"/>
    <property type="evidence" value="ECO:0000250"/>
    <property type="project" value="UniProtKB"/>
</dbReference>
<dbReference type="GO" id="GO:0008310">
    <property type="term" value="F:single-stranded DNA 3'-5' DNA exonuclease activity"/>
    <property type="evidence" value="ECO:0000250"/>
    <property type="project" value="UniProtKB"/>
</dbReference>
<dbReference type="GO" id="GO:0003697">
    <property type="term" value="F:single-stranded DNA binding"/>
    <property type="evidence" value="ECO:0000250"/>
    <property type="project" value="UniProtKB"/>
</dbReference>
<dbReference type="GO" id="GO:0006308">
    <property type="term" value="P:DNA catabolic process"/>
    <property type="evidence" value="ECO:0000250"/>
    <property type="project" value="UniProtKB"/>
</dbReference>
<dbReference type="GO" id="GO:0006281">
    <property type="term" value="P:DNA repair"/>
    <property type="evidence" value="ECO:0007669"/>
    <property type="project" value="UniProtKB-KW"/>
</dbReference>
<dbReference type="CDD" id="cd06138">
    <property type="entry name" value="ExoI_N"/>
    <property type="match status" value="1"/>
</dbReference>
<dbReference type="FunFam" id="1.20.1280.70:FF:000001">
    <property type="entry name" value="Exodeoxyribonuclease I"/>
    <property type="match status" value="1"/>
</dbReference>
<dbReference type="FunFam" id="3.30.1520.20:FF:000001">
    <property type="entry name" value="Exodeoxyribonuclease I"/>
    <property type="match status" value="1"/>
</dbReference>
<dbReference type="FunFam" id="3.30.420.10:FF:000033">
    <property type="entry name" value="Exodeoxyribonuclease I"/>
    <property type="match status" value="1"/>
</dbReference>
<dbReference type="Gene3D" id="1.10.287.1240">
    <property type="match status" value="1"/>
</dbReference>
<dbReference type="Gene3D" id="3.30.1520.20">
    <property type="entry name" value="Exonuclease ExoI, domain 2"/>
    <property type="match status" value="1"/>
</dbReference>
<dbReference type="Gene3D" id="1.20.1280.70">
    <property type="entry name" value="Exonuclease ExoI, domain 3"/>
    <property type="match status" value="1"/>
</dbReference>
<dbReference type="Gene3D" id="3.30.420.10">
    <property type="entry name" value="Ribonuclease H-like superfamily/Ribonuclease H"/>
    <property type="match status" value="1"/>
</dbReference>
<dbReference type="InterPro" id="IPR023607">
    <property type="entry name" value="Exodeoxyribonuclease_I"/>
</dbReference>
<dbReference type="InterPro" id="IPR034748">
    <property type="entry name" value="EXOI_C"/>
</dbReference>
<dbReference type="InterPro" id="IPR034747">
    <property type="entry name" value="EXOI_SH3"/>
</dbReference>
<dbReference type="InterPro" id="IPR038649">
    <property type="entry name" value="EXOI_SH3_sf"/>
</dbReference>
<dbReference type="InterPro" id="IPR013620">
    <property type="entry name" value="Exonuc_1_C"/>
</dbReference>
<dbReference type="InterPro" id="IPR013520">
    <property type="entry name" value="Exonuclease_RNaseT/DNA_pol3"/>
</dbReference>
<dbReference type="InterPro" id="IPR022894">
    <property type="entry name" value="Oligoribonuclease"/>
</dbReference>
<dbReference type="InterPro" id="IPR012337">
    <property type="entry name" value="RNaseH-like_sf"/>
</dbReference>
<dbReference type="InterPro" id="IPR036397">
    <property type="entry name" value="RNaseH_sf"/>
</dbReference>
<dbReference type="NCBIfam" id="NF008746">
    <property type="entry name" value="PRK11779.1"/>
    <property type="match status" value="1"/>
</dbReference>
<dbReference type="PANTHER" id="PTHR11046:SF11">
    <property type="entry name" value="EXODEOXYRIBONUCLEASE I"/>
    <property type="match status" value="1"/>
</dbReference>
<dbReference type="PANTHER" id="PTHR11046">
    <property type="entry name" value="OLIGORIBONUCLEASE, MITOCHONDRIAL"/>
    <property type="match status" value="1"/>
</dbReference>
<dbReference type="Pfam" id="PF08411">
    <property type="entry name" value="Exonuc_X-T_C"/>
    <property type="match status" value="1"/>
</dbReference>
<dbReference type="Pfam" id="PF00929">
    <property type="entry name" value="RNase_T"/>
    <property type="match status" value="1"/>
</dbReference>
<dbReference type="PIRSF" id="PIRSF000977">
    <property type="entry name" value="Exodeoxyribonuclease_I"/>
    <property type="match status" value="1"/>
</dbReference>
<dbReference type="SUPFAM" id="SSF53098">
    <property type="entry name" value="Ribonuclease H-like"/>
    <property type="match status" value="1"/>
</dbReference>
<dbReference type="PROSITE" id="PS51785">
    <property type="entry name" value="EXOI_C"/>
    <property type="match status" value="1"/>
</dbReference>
<dbReference type="PROSITE" id="PS51784">
    <property type="entry name" value="EXOI_SH3"/>
    <property type="match status" value="1"/>
</dbReference>
<accession>Q8K923</accession>
<proteinExistence type="inferred from homology"/>
<feature type="chain" id="PRO_0000087108" description="Exodeoxyribonuclease I">
    <location>
        <begin position="1"/>
        <end position="482"/>
    </location>
</feature>
<feature type="domain" description="Exonuclease" evidence="2">
    <location>
        <begin position="13"/>
        <end position="194"/>
    </location>
</feature>
<feature type="domain" description="ExoI SH3-like" evidence="3">
    <location>
        <begin position="203"/>
        <end position="351"/>
    </location>
</feature>
<feature type="domain" description="ExoI C-terminal" evidence="4">
    <location>
        <begin position="355"/>
        <end position="471"/>
    </location>
</feature>
<feature type="binding site" evidence="1">
    <location>
        <position position="16"/>
    </location>
    <ligand>
        <name>Mg(2+)</name>
        <dbReference type="ChEBI" id="CHEBI:18420"/>
        <label>1</label>
    </ligand>
</feature>
<feature type="binding site" evidence="1">
    <location>
        <position position="18"/>
    </location>
    <ligand>
        <name>Mg(2+)</name>
        <dbReference type="ChEBI" id="CHEBI:18420"/>
        <label>2</label>
    </ligand>
</feature>
<feature type="binding site" evidence="1">
    <location>
        <position position="18"/>
    </location>
    <ligand>
        <name>substrate</name>
    </ligand>
</feature>
<feature type="binding site" evidence="1">
    <location>
        <position position="187"/>
    </location>
    <ligand>
        <name>Mg(2+)</name>
        <dbReference type="ChEBI" id="CHEBI:18420"/>
        <label>2</label>
    </ligand>
</feature>
<feature type="site" description="Interaction with single-stranded DNA" evidence="1">
    <location>
        <position position="114"/>
    </location>
</feature>
<feature type="site" description="Interaction with single-stranded DNA" evidence="1">
    <location>
        <position position="125"/>
    </location>
</feature>
<feature type="site" description="Interaction with single-stranded DNA" evidence="1">
    <location>
        <position position="129"/>
    </location>
</feature>
<feature type="site" description="Interaction with single-stranded DNA" evidence="1">
    <location>
        <position position="143"/>
    </location>
</feature>
<feature type="site" description="Important for interaction with ssb" evidence="1">
    <location>
        <position position="149"/>
    </location>
</feature>
<feature type="site" description="Important for activity" evidence="1">
    <location>
        <position position="182"/>
    </location>
</feature>
<feature type="site" description="Interaction with single-stranded DNA" evidence="1">
    <location>
        <position position="215"/>
    </location>
</feature>
<feature type="site" description="Interaction with single-stranded DNA" evidence="1">
    <location>
        <position position="258"/>
    </location>
</feature>
<feature type="site" description="Interaction with single-stranded DNA" evidence="1">
    <location>
        <position position="300"/>
    </location>
</feature>
<feature type="site" description="Interaction with single-stranded DNA" evidence="1">
    <location>
        <position position="364"/>
    </location>
</feature>
<feature type="site" description="Interaction with single-stranded DNA" evidence="1">
    <location>
        <position position="367"/>
    </location>
</feature>
<comment type="function">
    <text evidence="1">Degrades single-stranded DNA (ssDNA) in a highly processive manner. Also functions as a DNA deoxyribophosphodiesterase that releases deoxyribose-phosphate moieties following the cleavage of DNA at an apurinic/apyrimidinic (AP) site by either an AP endonuclease or AP lyase.</text>
</comment>
<comment type="catalytic activity">
    <reaction evidence="1">
        <text>Exonucleolytic cleavage in the 3'- to 5'-direction to yield nucleoside 5'-phosphates.</text>
        <dbReference type="EC" id="3.1.11.1"/>
    </reaction>
</comment>
<comment type="cofactor">
    <cofactor evidence="1">
        <name>Mg(2+)</name>
        <dbReference type="ChEBI" id="CHEBI:18420"/>
    </cofactor>
    <text evidence="1">Binds 2 Mg(2+) ions per monomer.</text>
</comment>
<comment type="subunit">
    <text evidence="1">Monomer. Interacts with ssb (via C-terminus); this interaction stimulates the exonuclease activity by recruiting the enzyme to its substrate.</text>
</comment>
<comment type="domain">
    <text evidence="1">The N-terminal exonuclease domain and the exonuclease C-terminal domain form a central positively charged groove which binds the DNA.</text>
</comment>
<organism>
    <name type="scientific">Buchnera aphidicola subsp. Schizaphis graminum (strain Sg)</name>
    <dbReference type="NCBI Taxonomy" id="198804"/>
    <lineage>
        <taxon>Bacteria</taxon>
        <taxon>Pseudomonadati</taxon>
        <taxon>Pseudomonadota</taxon>
        <taxon>Gammaproteobacteria</taxon>
        <taxon>Enterobacterales</taxon>
        <taxon>Erwiniaceae</taxon>
        <taxon>Buchnera</taxon>
    </lineage>
</organism>
<evidence type="ECO:0000250" key="1">
    <source>
        <dbReference type="UniProtKB" id="P04995"/>
    </source>
</evidence>
<evidence type="ECO:0000255" key="2"/>
<evidence type="ECO:0000255" key="3">
    <source>
        <dbReference type="PROSITE-ProRule" id="PRU01120"/>
    </source>
</evidence>
<evidence type="ECO:0000255" key="4">
    <source>
        <dbReference type="PROSITE-ProRule" id="PRU01121"/>
    </source>
</evidence>
<keyword id="KW-0227">DNA damage</keyword>
<keyword id="KW-0234">DNA repair</keyword>
<keyword id="KW-0238">DNA-binding</keyword>
<keyword id="KW-0269">Exonuclease</keyword>
<keyword id="KW-0378">Hydrolase</keyword>
<keyword id="KW-0460">Magnesium</keyword>
<keyword id="KW-0479">Metal-binding</keyword>
<keyword id="KW-0540">Nuclease</keyword>
<name>EX1_BUCAP</name>
<reference key="1">
    <citation type="journal article" date="2002" name="Science">
        <title>50 million years of genomic stasis in endosymbiotic bacteria.</title>
        <authorList>
            <person name="Tamas I."/>
            <person name="Klasson L."/>
            <person name="Canbaeck B."/>
            <person name="Naeslund A.K."/>
            <person name="Eriksson A.-S."/>
            <person name="Wernegreen J.J."/>
            <person name="Sandstroem J.P."/>
            <person name="Moran N.A."/>
            <person name="Andersson S.G.E."/>
        </authorList>
    </citation>
    <scope>NUCLEOTIDE SEQUENCE [LARGE SCALE GENOMIC DNA]</scope>
    <source>
        <strain>Sg</strain>
    </source>
</reference>
<gene>
    <name type="primary">sbcB</name>
    <name type="ordered locus">BUsg_537</name>
</gene>
<sequence length="482" mass="57565">MKNILKKNEVNFLFYDYETFGIHTSLDKPAQFSSIRTDKNFNIMEEPKCFYCFPSDDYLPDPSSILITGITPEYTEKHGFNEYKFSKKIHDVLLKPNTCIIGYNNINFDDEITRNIFYRNFLDPYEWSWKNNNSRWDLLNVVRACYALRPSGIQWPKNEFGLPVFKLSDLTQKNNISHYNAHDATSDVYATIELAKLIKRKQPKLFDFFFKYRKKNELCRLIDIEKFTPIIYVSSYFGALRQNMSCILPLSWDLHNKNILISIDLFKDIDKLIVFCKTVSISNISIKDLFDLGIVLVYLNRCPILAPIKVIRKEDTNRLNFKKYFYYKKINLVKKNYFLIDLVKNVLLKKNENKNSLNVDLQIYDSFFNFHDKNLIKKISLTKSSDLKKMKLDFKDPRLKELFFRYKARNFFNILKNDEKKEWINYCLKTLNSFFLTGYIDKIESLLKIYSYDVKKNNLLSDLLKYVFKKYKKVFYKNINLS</sequence>
<protein>
    <recommendedName>
        <fullName>Exodeoxyribonuclease I</fullName>
        <shortName>ExoI</shortName>
        <shortName>Exonuclease I</shortName>
        <ecNumber evidence="1">3.1.11.1</ecNumber>
    </recommendedName>
    <alternativeName>
        <fullName>DNA deoxyribophosphodiesterase</fullName>
        <shortName>dRPase</shortName>
    </alternativeName>
</protein>